<keyword id="KW-0131">Cell cycle</keyword>
<keyword id="KW-0132">Cell division</keyword>
<keyword id="KW-0997">Cell inner membrane</keyword>
<keyword id="KW-1003">Cell membrane</keyword>
<keyword id="KW-0472">Membrane</keyword>
<keyword id="KW-0812">Transmembrane</keyword>
<keyword id="KW-1133">Transmembrane helix</keyword>
<gene>
    <name evidence="1" type="primary">zipA</name>
    <name type="ordered locus">Shal_2576</name>
</gene>
<comment type="function">
    <text evidence="1">Essential cell division protein that stabilizes the FtsZ protofilaments by cross-linking them and that serves as a cytoplasmic membrane anchor for the Z ring. Also required for the recruitment to the septal ring of downstream cell division proteins.</text>
</comment>
<comment type="subunit">
    <text evidence="1">Interacts with FtsZ via their C-terminal domains.</text>
</comment>
<comment type="subcellular location">
    <subcellularLocation>
        <location evidence="1">Cell inner membrane</location>
        <topology evidence="1">Single-pass type I membrane protein</topology>
    </subcellularLocation>
    <text evidence="1">Localizes to the Z ring in an FtsZ-dependent manner.</text>
</comment>
<comment type="similarity">
    <text evidence="1">Belongs to the ZipA family.</text>
</comment>
<protein>
    <recommendedName>
        <fullName evidence="1">Cell division protein ZipA</fullName>
    </recommendedName>
</protein>
<feature type="chain" id="PRO_1000081582" description="Cell division protein ZipA">
    <location>
        <begin position="1"/>
        <end position="306"/>
    </location>
</feature>
<feature type="topological domain" description="Periplasmic" evidence="1">
    <location>
        <begin position="1"/>
        <end position="6"/>
    </location>
</feature>
<feature type="transmembrane region" description="Helical" evidence="1">
    <location>
        <begin position="7"/>
        <end position="27"/>
    </location>
</feature>
<feature type="topological domain" description="Cytoplasmic" evidence="1">
    <location>
        <begin position="28"/>
        <end position="306"/>
    </location>
</feature>
<name>ZIPA_SHEHH</name>
<proteinExistence type="inferred from homology"/>
<reference key="1">
    <citation type="submission" date="2008-01" db="EMBL/GenBank/DDBJ databases">
        <title>Complete sequence of Shewanella halifaxensis HAW-EB4.</title>
        <authorList>
            <consortium name="US DOE Joint Genome Institute"/>
            <person name="Copeland A."/>
            <person name="Lucas S."/>
            <person name="Lapidus A."/>
            <person name="Glavina del Rio T."/>
            <person name="Dalin E."/>
            <person name="Tice H."/>
            <person name="Bruce D."/>
            <person name="Goodwin L."/>
            <person name="Pitluck S."/>
            <person name="Sims D."/>
            <person name="Brettin T."/>
            <person name="Detter J.C."/>
            <person name="Han C."/>
            <person name="Kuske C.R."/>
            <person name="Schmutz J."/>
            <person name="Larimer F."/>
            <person name="Land M."/>
            <person name="Hauser L."/>
            <person name="Kyrpides N."/>
            <person name="Kim E."/>
            <person name="Zhao J.-S."/>
            <person name="Richardson P."/>
        </authorList>
    </citation>
    <scope>NUCLEOTIDE SEQUENCE [LARGE SCALE GENOMIC DNA]</scope>
    <source>
        <strain>HAW-EB4</strain>
    </source>
</reference>
<evidence type="ECO:0000255" key="1">
    <source>
        <dbReference type="HAMAP-Rule" id="MF_00509"/>
    </source>
</evidence>
<sequence length="306" mass="33442">MENLQLVLLLIGAIAIIAVLVHGFWSIRKQQPKGYKQGSMVGINRERRDAEGFDNDGIGEVRVVKSTPAEAETSKPDVNEQAPQFIEPVEEAFELSQAPAIKVNKTRVEPSLSAEAPAFTAEAPVQESLFATDEPLLAEPVIEARQAPLDVAPQEPVVDEPKQVATEALGEPQDVLVLHVVAKEGKELSGAELLPCLLTLNFKFGDLNIFHRHEDNAGTGKVLFSMANMVKPGVFDPDNMEQFSTQGVVLFMTLPCYGDALMNFSIMLNSAHQIADDLGGVLLDGGRDEWLESTKQNYIQRIRAQA</sequence>
<organism>
    <name type="scientific">Shewanella halifaxensis (strain HAW-EB4)</name>
    <dbReference type="NCBI Taxonomy" id="458817"/>
    <lineage>
        <taxon>Bacteria</taxon>
        <taxon>Pseudomonadati</taxon>
        <taxon>Pseudomonadota</taxon>
        <taxon>Gammaproteobacteria</taxon>
        <taxon>Alteromonadales</taxon>
        <taxon>Shewanellaceae</taxon>
        <taxon>Shewanella</taxon>
    </lineage>
</organism>
<accession>B0TKB3</accession>
<dbReference type="EMBL" id="CP000931">
    <property type="protein sequence ID" value="ABZ77132.1"/>
    <property type="molecule type" value="Genomic_DNA"/>
</dbReference>
<dbReference type="RefSeq" id="WP_012277660.1">
    <property type="nucleotide sequence ID" value="NC_010334.1"/>
</dbReference>
<dbReference type="SMR" id="B0TKB3"/>
<dbReference type="STRING" id="458817.Shal_2576"/>
<dbReference type="KEGG" id="shl:Shal_2576"/>
<dbReference type="eggNOG" id="COG3115">
    <property type="taxonomic scope" value="Bacteria"/>
</dbReference>
<dbReference type="HOGENOM" id="CLU_030174_1_0_6"/>
<dbReference type="OrthoDB" id="7054914at2"/>
<dbReference type="Proteomes" id="UP000001317">
    <property type="component" value="Chromosome"/>
</dbReference>
<dbReference type="GO" id="GO:0032153">
    <property type="term" value="C:cell division site"/>
    <property type="evidence" value="ECO:0007669"/>
    <property type="project" value="UniProtKB-UniRule"/>
</dbReference>
<dbReference type="GO" id="GO:0005886">
    <property type="term" value="C:plasma membrane"/>
    <property type="evidence" value="ECO:0007669"/>
    <property type="project" value="UniProtKB-SubCell"/>
</dbReference>
<dbReference type="GO" id="GO:0000917">
    <property type="term" value="P:division septum assembly"/>
    <property type="evidence" value="ECO:0007669"/>
    <property type="project" value="TreeGrafter"/>
</dbReference>
<dbReference type="GO" id="GO:0043093">
    <property type="term" value="P:FtsZ-dependent cytokinesis"/>
    <property type="evidence" value="ECO:0007669"/>
    <property type="project" value="UniProtKB-UniRule"/>
</dbReference>
<dbReference type="Gene3D" id="3.30.1400.10">
    <property type="entry name" value="ZipA, C-terminal FtsZ-binding domain"/>
    <property type="match status" value="1"/>
</dbReference>
<dbReference type="HAMAP" id="MF_00509">
    <property type="entry name" value="ZipA"/>
    <property type="match status" value="1"/>
</dbReference>
<dbReference type="InterPro" id="IPR011919">
    <property type="entry name" value="Cell_div_ZipA"/>
</dbReference>
<dbReference type="InterPro" id="IPR007449">
    <property type="entry name" value="ZipA_FtsZ-bd_C"/>
</dbReference>
<dbReference type="InterPro" id="IPR036765">
    <property type="entry name" value="ZipA_FtsZ-bd_C_sf"/>
</dbReference>
<dbReference type="NCBIfam" id="TIGR02205">
    <property type="entry name" value="septum_zipA"/>
    <property type="match status" value="1"/>
</dbReference>
<dbReference type="PANTHER" id="PTHR38685">
    <property type="entry name" value="CELL DIVISION PROTEIN ZIPA"/>
    <property type="match status" value="1"/>
</dbReference>
<dbReference type="PANTHER" id="PTHR38685:SF1">
    <property type="entry name" value="CELL DIVISION PROTEIN ZIPA"/>
    <property type="match status" value="1"/>
</dbReference>
<dbReference type="Pfam" id="PF04354">
    <property type="entry name" value="ZipA_C"/>
    <property type="match status" value="1"/>
</dbReference>
<dbReference type="SMART" id="SM00771">
    <property type="entry name" value="ZipA_C"/>
    <property type="match status" value="1"/>
</dbReference>
<dbReference type="SUPFAM" id="SSF64383">
    <property type="entry name" value="Cell-division protein ZipA, C-terminal domain"/>
    <property type="match status" value="1"/>
</dbReference>